<protein>
    <recommendedName>
        <fullName>Voltage-dependent L-type calcium channel subunit alpha-1C</fullName>
    </recommendedName>
    <alternativeName>
        <fullName>Calcium channel, L type, alpha-1 polypeptide, isoform 1, cardiac muscle</fullName>
    </alternativeName>
    <alternativeName>
        <fullName evidence="12">Rat brain class C</fullName>
        <shortName evidence="12">RBC</shortName>
    </alternativeName>
    <alternativeName>
        <fullName>Voltage-gated calcium channel subunit alpha Cav1.2</fullName>
    </alternativeName>
</protein>
<gene>
    <name type="primary">Cacna1c</name>
    <name type="synonym">Cach2</name>
    <name type="synonym">Cacn2</name>
    <name type="synonym">Cacnl1a1</name>
    <name type="synonym">Cchl1a1</name>
</gene>
<comment type="function">
    <text evidence="2 3 4 7 8 16">Pore-forming, alpha-1C subunit of the voltage-gated calcium channel that gives rise to L-type calcium currents (Probable) (PubMed:15140941, PubMed:15170217). Mediates influx of calcium ions into the cytoplasm, and thereby triggers calcium release from the sarcoplasm (By similarity). Plays an important role in excitation-contraction coupling in the heart (By similarity). Required for normal heart development and normal regulation of heart rhythm (By similarity). Required for normal contraction of smooth muscle cells in blood vessels and in the intestine. Essential for normal blood pressure regulation via its role in the contraction of arterial smooth muscle cells (By similarity). Long-lasting (L-type) calcium channels belong to the 'high-voltage activated' (HVA) group (By similarity).</text>
</comment>
<comment type="catalytic activity">
    <reaction evidence="7 8 9">
        <text>Ca(2+)(in) = Ca(2+)(out)</text>
        <dbReference type="Rhea" id="RHEA:29671"/>
        <dbReference type="ChEBI" id="CHEBI:29108"/>
    </reaction>
</comment>
<comment type="activity regulation">
    <text evidence="2 4 7">Inhibited by dihydropyridines (DHP), such as isradipine (By similarity). Inhibited by nifedipine (By similarity). Channel activity is regulated by Ca(2+) and calmodulin (PubMed:15140941). Binding of STAC1, STAC2 or STAC3 to a region that overlaps with the calmodulin binding site inhibits channel inactivation by Ca(2+) and calmodulin (By similarity). Binding of calmodulin or CABP1 at the same regulatory sites results in opposite effects on the channel function (PubMed:15140941). Shear stress and pressure increases calcium channel activity (By similarity).</text>
</comment>
<comment type="subunit">
    <text evidence="2 3 4 7 8 10">Component of a calcium channel complex consisting of a pore-forming alpha subunit (CACNA1C) and ancillary beta, gamma and delta subunits (PubMed:15170217). The channel complex contains alpha, beta, gamma and delta subunits in a 1:1:1:1 ratio, i.e. it contains only one of each type of subunit. CACNA1C channel activity is modulated by ancillary subunits, such as CACNB1, CACNB2, CACNB3, CACNA2D1 and CACNA2D4 (By similarity). Interacts with the gamma subunits CACNG4, CACNG6, CACNG7 and CACNG8 (By similarity). Interacts with CACNB1 (By similarity). Interacts with CACNB2. Identified in a complex with CACNA2D4 and CACNB3 (By similarity). Interacts with CACNB3 (PubMed:15170217, PubMed:24751537). Interacts with CACNA2D1. Interacts with CACNA2D4. Interacts with CALM1. Interacts (via the N-terminus and the C-terminal C and IQ motifs) with CABP1; this inhibits Ca(2+)-dependent channel inactivation (PubMed:15140941). The binding via the C motif is calcium independent whereas the binding via IQ requires the presence of calcium and is mutually exclusive with calmodulin binding (PubMed:15140941). The binding to the cytoplasmic N-terminal domain is calcium independent but is essential for the channel modulation. Interacts (via C-terminal CDB motif) with CABP5; in a calcium-dependent manner. Interacts with CIB1; the interaction increases upon cardiomyocytes hypertrophy (By similarity). Interacts with STAC2 and STAC3; this inhibits channel inactivation (By similarity).</text>
</comment>
<comment type="interaction">
    <interactant intactId="EBI-1185084">
        <id>P22002</id>
    </interactant>
    <interactant intactId="EBI-7022944">
        <id>P63329</id>
        <label>Ppp3ca</label>
    </interactant>
    <organismsDiffer>false</organismsDiffer>
    <experiments>5</experiments>
</comment>
<comment type="interaction">
    <interactant intactId="EBI-1185084">
        <id>P22002</id>
    </interactant>
    <interactant intactId="EBI-7784541">
        <id>Q9WUD9</id>
        <label>Src</label>
    </interactant>
    <organismsDiffer>false</organismsDiffer>
    <experiments>4</experiments>
</comment>
<comment type="subcellular location">
    <subcellularLocation>
        <location evidence="7 8 16">Cell membrane</location>
        <topology evidence="15">Multi-pass membrane protein</topology>
    </subcellularLocation>
    <subcellularLocation>
        <location evidence="2">Cell membrane</location>
        <location evidence="2">Sarcolemma</location>
        <topology evidence="15">Multi-pass membrane protein</topology>
    </subcellularLocation>
    <subcellularLocation>
        <location evidence="7">Perikaryon</location>
    </subcellularLocation>
    <subcellularLocation>
        <location evidence="7">Postsynaptic density membrane</location>
    </subcellularLocation>
    <subcellularLocation>
        <location evidence="7">Cell projection</location>
        <location evidence="7">Dendrite</location>
    </subcellularLocation>
    <subcellularLocation>
        <location evidence="3">Cell membrane</location>
        <location evidence="3">Sarcolemma</location>
        <location evidence="3">T-tubule</location>
    </subcellularLocation>
    <text evidence="2">Colocalizes with ryanodine receptors in distinct clusters at the junctional membrane, where the sarcolemma and the sarcoplasmic reticulum are in close contact. The interaction between RRAD and CACNB2 promotes the expression of CACNA1C at the cell membrane.</text>
</comment>
<comment type="alternative products">
    <event type="alternative splicing"/>
    <isoform>
        <id>P22002-1</id>
        <name>2</name>
        <name>S3B</name>
        <sequence type="displayed"/>
    </isoform>
    <isoform>
        <id>P22002-2</id>
        <name>1</name>
        <name>S3A</name>
        <sequence type="described" ref="VSP_000911"/>
    </isoform>
    <isoform>
        <id>P22002-3</id>
        <name>3</name>
        <name>D1</name>
        <name>ROB2</name>
        <sequence type="described" ref="VSP_000912"/>
    </isoform>
    <isoform>
        <id>P22002-4</id>
        <name>4</name>
        <name>rbC-I</name>
        <sequence type="described" ref="VSP_000908 VSP_000910 VSP_000911"/>
    </isoform>
    <isoform>
        <id>P22002-5</id>
        <name>5</name>
        <name>rbC-II</name>
        <sequence type="described" ref="VSP_000908 VSP_000909 VSP_000910"/>
    </isoform>
    <text>Additional isoforms seem to exist.</text>
</comment>
<comment type="tissue specificity">
    <text evidence="7">Detected in hippocampus and brain cortex, on neuronal cell bodies and dendrites, and in post-synaptic density in brain (at protein level) (PubMed:15140941). Isoforms 4 and 5 are expressed throughout the central nervous system, with highest levels in the olfactory bulb and cerebellum. Also expressed in heart, pituitary, adrenal gland, liver, kidney, and in a much lesser extent in testes and spleen.</text>
</comment>
<comment type="developmental stage">
    <text>Expressed from embryonic day 16 until the adult stage.</text>
</comment>
<comment type="domain">
    <text>Each of the four internal repeats contains five hydrophobic transmembrane segments (S1, S2, S3, S5, S6) and one positively charged transmembrane segment (S4). S4 segments probably represent the voltage-sensor and are characterized by a series of positively charged amino acids at every third position.</text>
</comment>
<comment type="domain">
    <text evidence="2">Binding of intracellular calcium through the EF-hand motif inhibits the opening of the channel.</text>
</comment>
<comment type="PTM">
    <text evidence="3 11">Phosphorylation by PKA at Ser-1927 activates the channel (By similarity). Elevated levels of blood glucose lead to increased phosphorylation by PKA (By similarity). Is also phosphorylated in vitro by CaM-kinase II, PKC and CGPK (PubMed:8396138).</text>
</comment>
<comment type="similarity">
    <text evidence="15">Belongs to the calcium channel alpha-1 subunit (TC 1.A.1.11) family. CACNA1C subfamily.</text>
</comment>
<proteinExistence type="evidence at protein level"/>
<name>CAC1C_RAT</name>
<feature type="chain" id="PRO_0000053931" description="Voltage-dependent L-type calcium channel subunit alpha-1C">
    <location>
        <begin position="1"/>
        <end position="2169"/>
    </location>
</feature>
<feature type="topological domain" description="Cytoplasmic" evidence="15">
    <location>
        <begin position="1"/>
        <end position="154"/>
    </location>
</feature>
<feature type="transmembrane region" description="Helical; Name=S1 of repeat I" evidence="1">
    <location>
        <begin position="155"/>
        <end position="173"/>
    </location>
</feature>
<feature type="topological domain" description="Extracellular" evidence="15">
    <location>
        <begin position="174"/>
        <end position="188"/>
    </location>
</feature>
<feature type="transmembrane region" description="Helical; Name=S2 of repeat I" evidence="1">
    <location>
        <begin position="189"/>
        <end position="209"/>
    </location>
</feature>
<feature type="topological domain" description="Cytoplasmic" evidence="15">
    <location>
        <begin position="210"/>
        <end position="218"/>
    </location>
</feature>
<feature type="transmembrane region" description="Helical; Name=S3 of repeat I" evidence="1">
    <location>
        <begin position="219"/>
        <end position="239"/>
    </location>
</feature>
<feature type="topological domain" description="Extracellular" evidence="15">
    <location>
        <begin position="240"/>
        <end position="262"/>
    </location>
</feature>
<feature type="transmembrane region" description="Helical; Name=S4 of repeat I" evidence="1">
    <location>
        <begin position="263"/>
        <end position="281"/>
    </location>
</feature>
<feature type="topological domain" description="Cytoplasmic" evidence="15">
    <location>
        <begin position="282"/>
        <end position="298"/>
    </location>
</feature>
<feature type="transmembrane region" description="Helical; Name=S5 of repeat I" evidence="1">
    <location>
        <begin position="299"/>
        <end position="320"/>
    </location>
</feature>
<feature type="topological domain" description="Extracellular" evidence="15">
    <location>
        <begin position="321"/>
        <end position="380"/>
    </location>
</feature>
<feature type="intramembrane region" description="Pore-forming" evidence="1">
    <location>
        <begin position="381"/>
        <end position="402"/>
    </location>
</feature>
<feature type="topological domain" description="Extracellular" evidence="15">
    <location>
        <begin position="403"/>
        <end position="410"/>
    </location>
</feature>
<feature type="transmembrane region" description="Helical; Name=S6 of repeat I" evidence="1">
    <location>
        <begin position="411"/>
        <end position="431"/>
    </location>
</feature>
<feature type="topological domain" description="Cytoplasmic" evidence="15">
    <location>
        <begin position="432"/>
        <end position="554"/>
    </location>
</feature>
<feature type="transmembrane region" description="Helical; Name=S1 of repeat II" evidence="1">
    <location>
        <begin position="555"/>
        <end position="573"/>
    </location>
</feature>
<feature type="topological domain" description="Extracellular" evidence="15">
    <location>
        <begin position="574"/>
        <end position="584"/>
    </location>
</feature>
<feature type="transmembrane region" description="Helical; Name=S2 of repeat II" evidence="1">
    <location>
        <begin position="585"/>
        <end position="605"/>
    </location>
</feature>
<feature type="topological domain" description="Cytoplasmic" evidence="15">
    <location>
        <begin position="606"/>
        <end position="616"/>
    </location>
</feature>
<feature type="transmembrane region" description="Helical; Name=S3 of repeat II" evidence="1">
    <location>
        <begin position="617"/>
        <end position="636"/>
    </location>
</feature>
<feature type="topological domain" description="Extracellular" evidence="15">
    <location>
        <begin position="637"/>
        <end position="645"/>
    </location>
</feature>
<feature type="transmembrane region" description="Helical; Name=S4 of repeat II" evidence="1">
    <location>
        <begin position="646"/>
        <end position="664"/>
    </location>
</feature>
<feature type="topological domain" description="Cytoplasmic" evidence="15">
    <location>
        <begin position="665"/>
        <end position="683"/>
    </location>
</feature>
<feature type="transmembrane region" description="Helical; Name=S5 of repeat II" evidence="1">
    <location>
        <begin position="684"/>
        <end position="703"/>
    </location>
</feature>
<feature type="topological domain" description="Extracellular" evidence="15">
    <location>
        <begin position="704"/>
        <end position="723"/>
    </location>
</feature>
<feature type="intramembrane region" description="Pore-forming" evidence="1">
    <location>
        <begin position="724"/>
        <end position="745"/>
    </location>
</feature>
<feature type="topological domain" description="Extracellular" evidence="15">
    <location>
        <begin position="746"/>
        <end position="755"/>
    </location>
</feature>
<feature type="transmembrane region" description="Helical; Name=S6 of repeat II" evidence="1">
    <location>
        <begin position="756"/>
        <end position="775"/>
    </location>
</feature>
<feature type="topological domain" description="Cytoplasmic" evidence="15">
    <location>
        <begin position="776"/>
        <end position="930"/>
    </location>
</feature>
<feature type="transmembrane region" description="Helical; Name=S1 of repeat III" evidence="1">
    <location>
        <begin position="931"/>
        <end position="949"/>
    </location>
</feature>
<feature type="topological domain" description="Extracellular" evidence="15">
    <location>
        <begin position="950"/>
        <end position="961"/>
    </location>
</feature>
<feature type="transmembrane region" description="Helical; Name=S2 of repeat III" evidence="1">
    <location>
        <begin position="962"/>
        <end position="981"/>
    </location>
</feature>
<feature type="topological domain" description="Cytoplasmic" evidence="15">
    <location>
        <begin position="982"/>
        <end position="997"/>
    </location>
</feature>
<feature type="transmembrane region" description="Helical; Name=S3 of repeat III" evidence="1">
    <location>
        <begin position="998"/>
        <end position="1016"/>
    </location>
</feature>
<feature type="topological domain" description="Extracellular" evidence="15">
    <location>
        <begin position="1017"/>
        <end position="1023"/>
    </location>
</feature>
<feature type="transmembrane region" description="Helical; Name=S4 of repeat III" evidence="1">
    <location>
        <begin position="1024"/>
        <end position="1041"/>
    </location>
</feature>
<feature type="topological domain" description="Cytoplasmic" evidence="15">
    <location>
        <begin position="1042"/>
        <end position="1060"/>
    </location>
</feature>
<feature type="transmembrane region" description="Helical; Name=S5 of repeat III" evidence="1">
    <location>
        <begin position="1061"/>
        <end position="1080"/>
    </location>
</feature>
<feature type="topological domain" description="Extracellular" evidence="15">
    <location>
        <begin position="1081"/>
        <end position="1130"/>
    </location>
</feature>
<feature type="intramembrane region" description="Pore-forming" evidence="1">
    <location>
        <begin position="1131"/>
        <end position="1151"/>
    </location>
</feature>
<feature type="topological domain" description="Extracellular" evidence="15">
    <location>
        <begin position="1152"/>
        <end position="1168"/>
    </location>
</feature>
<feature type="transmembrane region" description="Helical; Name=S6 of repeat III" evidence="1">
    <location>
        <begin position="1169"/>
        <end position="1190"/>
    </location>
</feature>
<feature type="topological domain" description="Cytoplasmic" evidence="15">
    <location>
        <begin position="1191"/>
        <end position="1248"/>
    </location>
</feature>
<feature type="transmembrane region" description="Helical; Name=S1 of repeat IV" evidence="1">
    <location>
        <begin position="1249"/>
        <end position="1270"/>
    </location>
</feature>
<feature type="topological domain" description="Extracellular" evidence="15">
    <location>
        <begin position="1271"/>
        <end position="1278"/>
    </location>
</feature>
<feature type="transmembrane region" description="Helical; Name=S2 of repeat IV" evidence="1">
    <location>
        <begin position="1279"/>
        <end position="1300"/>
    </location>
</feature>
<feature type="topological domain" description="Cytoplasmic" evidence="15">
    <location>
        <begin position="1301"/>
        <end position="1310"/>
    </location>
</feature>
<feature type="transmembrane region" description="Helical; Name=S3 of repeat IV" evidence="1">
    <location>
        <begin position="1311"/>
        <end position="1330"/>
    </location>
</feature>
<feature type="topological domain" description="Extracellular" evidence="15">
    <location>
        <begin position="1331"/>
        <end position="1353"/>
    </location>
</feature>
<feature type="transmembrane region" description="Helical; Name=S4 of repeat IV" evidence="1">
    <location>
        <begin position="1354"/>
        <end position="1372"/>
    </location>
</feature>
<feature type="topological domain" description="Cytoplasmic" evidence="15">
    <location>
        <begin position="1373"/>
        <end position="1390"/>
    </location>
</feature>
<feature type="transmembrane region" description="Helical; Name=S5 of repeat IV" evidence="1">
    <location>
        <begin position="1391"/>
        <end position="1411"/>
    </location>
</feature>
<feature type="topological domain" description="Extracellular" evidence="15">
    <location>
        <begin position="1412"/>
        <end position="1433"/>
    </location>
</feature>
<feature type="intramembrane region" description="Pore-forming" evidence="1">
    <location>
        <begin position="1434"/>
        <end position="1452"/>
    </location>
</feature>
<feature type="topological domain" description="Extracellular" evidence="15">
    <location>
        <begin position="1453"/>
        <end position="1480"/>
    </location>
</feature>
<feature type="transmembrane region" description="Helical; Name=S6 of repeat IV" evidence="1">
    <location>
        <begin position="1481"/>
        <end position="1505"/>
    </location>
</feature>
<feature type="topological domain" description="Cytoplasmic" evidence="15">
    <location>
        <begin position="1506"/>
        <end position="2169"/>
    </location>
</feature>
<feature type="repeat" description="I">
    <location>
        <begin position="141"/>
        <end position="438"/>
    </location>
</feature>
<feature type="repeat" description="II">
    <location>
        <begin position="540"/>
        <end position="786"/>
    </location>
</feature>
<feature type="repeat" description="III">
    <location>
        <begin position="917"/>
        <end position="1198"/>
    </location>
</feature>
<feature type="repeat" description="IV">
    <location>
        <begin position="1235"/>
        <end position="1508"/>
    </location>
</feature>
<feature type="region of interest" description="Calmodulin-binding" evidence="4">
    <location>
        <begin position="77"/>
        <end position="98"/>
    </location>
</feature>
<feature type="region of interest" description="Disordered" evidence="6">
    <location>
        <begin position="104"/>
        <end position="128"/>
    </location>
</feature>
<feature type="region of interest" description="AID/alpha-interaction domain; mediates interaction with the beta subunit" evidence="8">
    <location>
        <begin position="458"/>
        <end position="475"/>
    </location>
</feature>
<feature type="region of interest" description="Disordered" evidence="6">
    <location>
        <begin position="479"/>
        <end position="511"/>
    </location>
</feature>
<feature type="region of interest" description="Disordered" evidence="6">
    <location>
        <begin position="794"/>
        <end position="891"/>
    </location>
</feature>
<feature type="region of interest" description="Interaction with STAC2" evidence="4">
    <location>
        <begin position="859"/>
        <end position="906"/>
    </location>
</feature>
<feature type="region of interest" description="Dihydropyridine binding" evidence="1">
    <location>
        <begin position="1118"/>
        <end position="1207"/>
    </location>
</feature>
<feature type="region of interest" description="Dihydropyridine binding" evidence="1">
    <location>
        <begin position="1459"/>
        <end position="1527"/>
    </location>
</feature>
<feature type="region of interest" description="Phenylalkylamine binding" evidence="1">
    <location>
        <begin position="1473"/>
        <end position="1515"/>
    </location>
</feature>
<feature type="region of interest" description="Calmodulin-binding" evidence="4">
    <location>
        <begin position="1640"/>
        <end position="1673"/>
    </location>
</feature>
<feature type="region of interest" description="Important for interaction with STAC1, STAC2 and STAC3" evidence="2">
    <location>
        <begin position="1640"/>
        <end position="1667"/>
    </location>
</feature>
<feature type="region of interest" description="Calmodulin-binding IQ region" evidence="4">
    <location>
        <begin position="1646"/>
        <end position="1666"/>
    </location>
</feature>
<feature type="region of interest" description="Important for localization in at the junctional membrane" evidence="2">
    <location>
        <begin position="1680"/>
        <end position="1699"/>
    </location>
</feature>
<feature type="region of interest" description="Disordered" evidence="6">
    <location>
        <begin position="1761"/>
        <end position="1793"/>
    </location>
</feature>
<feature type="region of interest" description="Disordered" evidence="6">
    <location>
        <begin position="1970"/>
        <end position="1998"/>
    </location>
</feature>
<feature type="short sequence motif" description="Selectivity filter of repeat I" evidence="1">
    <location>
        <begin position="391"/>
        <end position="394"/>
    </location>
</feature>
<feature type="short sequence motif" description="Selectivity filter of repeat II" evidence="1">
    <location>
        <begin position="734"/>
        <end position="737"/>
    </location>
</feature>
<feature type="short sequence motif" description="Selectivity filter of repeat III" evidence="1">
    <location>
        <begin position="1142"/>
        <end position="1145"/>
    </location>
</feature>
<feature type="short sequence motif" description="Selectivity filter of repeat IV" evidence="1">
    <location>
        <begin position="1443"/>
        <end position="1446"/>
    </location>
</feature>
<feature type="compositionally biased region" description="Basic residues" evidence="6">
    <location>
        <begin position="110"/>
        <end position="121"/>
    </location>
</feature>
<feature type="compositionally biased region" description="Polar residues" evidence="6">
    <location>
        <begin position="495"/>
        <end position="508"/>
    </location>
</feature>
<feature type="compositionally biased region" description="Basic and acidic residues" evidence="6">
    <location>
        <begin position="813"/>
        <end position="836"/>
    </location>
</feature>
<feature type="compositionally biased region" description="Acidic residues" evidence="6">
    <location>
        <begin position="873"/>
        <end position="882"/>
    </location>
</feature>
<feature type="compositionally biased region" description="Polar residues" evidence="6">
    <location>
        <begin position="1761"/>
        <end position="1770"/>
    </location>
</feature>
<feature type="compositionally biased region" description="Polar residues" evidence="6">
    <location>
        <begin position="1780"/>
        <end position="1792"/>
    </location>
</feature>
<feature type="compositionally biased region" description="Pro residues" evidence="6">
    <location>
        <begin position="1977"/>
        <end position="1987"/>
    </location>
</feature>
<feature type="binding site" evidence="1">
    <location>
        <position position="393"/>
    </location>
    <ligand>
        <name>Ca(2+)</name>
        <dbReference type="ChEBI" id="CHEBI:29108"/>
    </ligand>
</feature>
<feature type="binding site" evidence="1">
    <location>
        <position position="736"/>
    </location>
    <ligand>
        <name>Ca(2+)</name>
        <dbReference type="ChEBI" id="CHEBI:29108"/>
    </ligand>
</feature>
<feature type="binding site" evidence="1">
    <location>
        <position position="1144"/>
    </location>
    <ligand>
        <name>Ca(2+)</name>
        <dbReference type="ChEBI" id="CHEBI:29108"/>
    </ligand>
</feature>
<feature type="modified residue" description="Phosphoserine" evidence="3">
    <location>
        <position position="499"/>
    </location>
</feature>
<feature type="modified residue" description="Phosphothreonine" evidence="3">
    <location>
        <position position="506"/>
    </location>
</feature>
<feature type="modified residue" description="Phosphoserine" evidence="3">
    <location>
        <position position="838"/>
    </location>
</feature>
<feature type="modified residue" description="Phosphoserine" evidence="17">
    <location>
        <position position="845"/>
    </location>
</feature>
<feature type="modified residue" description="Phosphoserine" evidence="17">
    <location>
        <position position="1699"/>
    </location>
</feature>
<feature type="modified residue" description="Phosphoserine" evidence="17">
    <location>
        <position position="1720"/>
    </location>
</feature>
<feature type="modified residue" description="Phosphoserine; by PKA" evidence="3">
    <location>
        <position position="1927"/>
    </location>
</feature>
<feature type="glycosylation site" description="N-linked (GlcNAc...) asparagine" evidence="5">
    <location>
        <position position="183"/>
    </location>
</feature>
<feature type="glycosylation site" description="N-linked (GlcNAc...) asparagine" evidence="5">
    <location>
        <position position="358"/>
    </location>
</feature>
<feature type="glycosylation site" description="N-linked (GlcNAc...) asparagine" evidence="5">
    <location>
        <position position="1417"/>
    </location>
</feature>
<feature type="glycosylation site" description="N-linked (GlcNAc...) asparagine" evidence="5">
    <location>
        <position position="1468"/>
    </location>
</feature>
<feature type="disulfide bond" evidence="1">
    <location>
        <begin position="328"/>
        <end position="356"/>
    </location>
</feature>
<feature type="disulfide bond" evidence="1">
    <location>
        <begin position="346"/>
        <end position="362"/>
    </location>
</feature>
<feature type="disulfide bond" evidence="1">
    <location>
        <begin position="1460"/>
        <end position="1476"/>
    </location>
</feature>
<feature type="splice variant" id="VSP_000908" description="In isoform 4 and isoform 5." evidence="12">
    <original>MIRAFAQPSTPPYQPLSSCLSEDTERKFKGKVVHEAQLNCFYISPG</original>
    <variation>MVNENTRMYVPEENHQ</variation>
    <location>
        <begin position="1"/>
        <end position="46"/>
    </location>
</feature>
<feature type="splice variant" id="VSP_000909" description="In isoform 5." evidence="12">
    <original>R</original>
    <variation>RPAR</variation>
    <location>
        <position position="810"/>
    </location>
</feature>
<feature type="splice variant" id="VSP_000910" description="In isoform 4 and isoform 5." evidence="12">
    <original>FYFDIVFTTIFTIEIA</original>
    <variation>GNADYVFTSIFTLEII</variation>
    <location>
        <begin position="964"/>
        <end position="979"/>
    </location>
</feature>
<feature type="splice variant" id="VSP_000911" description="In isoform 1 and isoform 4." evidence="12 13">
    <original>HYFCDAWNTFDALIVVGSIVDIAITEVH</original>
    <variation>GYFSDPSNVFDFLIVIGSIIAVILSETN</variation>
    <location>
        <begin position="1306"/>
        <end position="1333"/>
    </location>
</feature>
<feature type="splice variant" id="VSP_000912" description="In isoform 3." evidence="14">
    <location>
        <begin position="1334"/>
        <end position="1344"/>
    </location>
</feature>
<feature type="sequence conflict" description="In Ref. 2; AAA18905/AAA42016." evidence="15" ref="2">
    <original>L</original>
    <variation>Q</variation>
    <location>
        <position position="83"/>
    </location>
</feature>
<feature type="sequence conflict" description="In Ref. 2; AAA18905." evidence="15" ref="2">
    <original>D</original>
    <variation>G</variation>
    <location>
        <position position="87"/>
    </location>
</feature>
<feature type="sequence conflict" description="In Ref. 2; AAA18905." evidence="15" ref="2">
    <original>G</original>
    <variation>R</variation>
    <location>
        <position position="520"/>
    </location>
</feature>
<feature type="sequence conflict" description="In Ref. 2; AAA18905/AAA42016." evidence="15" ref="2">
    <original>CW</original>
    <variation>VL</variation>
    <location>
        <begin position="648"/>
        <end position="649"/>
    </location>
</feature>
<feature type="sequence conflict" description="In Ref. 2; AAA18905/AAA42016." evidence="15" ref="2">
    <original>L</original>
    <variation>V</variation>
    <location>
        <position position="678"/>
    </location>
</feature>
<feature type="sequence conflict" description="In Ref. 2; AAA18905/AAA42016." evidence="15" ref="2">
    <original>SP</original>
    <variation>CG</variation>
    <location>
        <begin position="769"/>
        <end position="770"/>
    </location>
</feature>
<feature type="sequence conflict" description="In Ref. 2; AAA18905/AAA42016." evidence="15" ref="2">
    <original>L</original>
    <variation>V</variation>
    <location>
        <position position="777"/>
    </location>
</feature>
<feature type="sequence conflict" description="In Ref. 2; AAA18905." evidence="15" ref="2">
    <original>D</original>
    <variation>N</variation>
    <location>
        <position position="871"/>
    </location>
</feature>
<feature type="sequence conflict" description="In Ref. 2; AAA18905/AAA42016." evidence="15" ref="2">
    <original>R</original>
    <variation>RA</variation>
    <location>
        <position position="1037"/>
    </location>
</feature>
<feature type="sequence conflict" description="In Ref. 2; AAA18905/AAA42016." evidence="15" ref="2">
    <original>S</original>
    <variation>C</variation>
    <location>
        <position position="1098"/>
    </location>
</feature>
<feature type="sequence conflict" description="In Ref. 2; AAA18905/AAA42016." evidence="15" ref="2">
    <original>T</original>
    <variation>D</variation>
    <location>
        <position position="1107"/>
    </location>
</feature>
<feature type="sequence conflict" description="In Ref. 2; AAA18905/AAA42016, 3; no nucleotide entry and 6; AAA89157." evidence="15" ref="2 3 6">
    <original>P</original>
    <variation>R</variation>
    <location>
        <position position="1229"/>
    </location>
</feature>
<feature type="sequence conflict" description="In Ref. 5; AAB35528." evidence="15" ref="5">
    <original>H</original>
    <variation>D</variation>
    <location>
        <position position="1306"/>
    </location>
</feature>
<feature type="sequence conflict" description="In Ref. 2; AAA42016 and 6; AAA89157." evidence="15" ref="2 6">
    <original>H</original>
    <variation>G</variation>
    <location>
        <position position="1306"/>
    </location>
</feature>
<feature type="sequence conflict" description="In Ref. 5; AAB35528." evidence="15" ref="5">
    <original>I</original>
    <variation>L</variation>
    <location>
        <position position="1329"/>
    </location>
</feature>
<feature type="sequence conflict" description="In Ref. 2; AAA18905." evidence="15" ref="2">
    <original>E</original>
    <variation>K</variation>
    <location>
        <position position="1471"/>
    </location>
</feature>
<feature type="sequence conflict" description="In Ref. 2; AAA18905/AAA42016." evidence="15" ref="2">
    <original>C</original>
    <variation>S</variation>
    <location>
        <position position="1911"/>
    </location>
</feature>
<feature type="sequence conflict" description="In Ref. 2; AAA18905." evidence="15" ref="2">
    <original>K</original>
    <variation>N</variation>
    <location>
        <position position="2084"/>
    </location>
</feature>
<feature type="sequence conflict" description="In Ref. 2; AAA42016." evidence="15" ref="2">
    <original>R</original>
    <variation>Q</variation>
    <location>
        <position position="2154"/>
    </location>
</feature>
<feature type="helix" evidence="18">
    <location>
        <begin position="454"/>
        <end position="474"/>
    </location>
</feature>
<evidence type="ECO:0000250" key="1">
    <source>
        <dbReference type="UniProtKB" id="P07293"/>
    </source>
</evidence>
<evidence type="ECO:0000250" key="2">
    <source>
        <dbReference type="UniProtKB" id="P15381"/>
    </source>
</evidence>
<evidence type="ECO:0000250" key="3">
    <source>
        <dbReference type="UniProtKB" id="Q01815"/>
    </source>
</evidence>
<evidence type="ECO:0000250" key="4">
    <source>
        <dbReference type="UniProtKB" id="Q13936"/>
    </source>
</evidence>
<evidence type="ECO:0000255" key="5"/>
<evidence type="ECO:0000256" key="6">
    <source>
        <dbReference type="SAM" id="MobiDB-lite"/>
    </source>
</evidence>
<evidence type="ECO:0000269" key="7">
    <source>
    </source>
</evidence>
<evidence type="ECO:0000269" key="8">
    <source>
    </source>
</evidence>
<evidence type="ECO:0000269" key="9">
    <source>
    </source>
</evidence>
<evidence type="ECO:0000269" key="10">
    <source>
    </source>
</evidence>
<evidence type="ECO:0000269" key="11">
    <source>
    </source>
</evidence>
<evidence type="ECO:0000303" key="12">
    <source>
    </source>
</evidence>
<evidence type="ECO:0000303" key="13">
    <source>
    </source>
</evidence>
<evidence type="ECO:0000303" key="14">
    <source>
    </source>
</evidence>
<evidence type="ECO:0000305" key="15"/>
<evidence type="ECO:0000305" key="16">
    <source>
    </source>
</evidence>
<evidence type="ECO:0007744" key="17">
    <source>
    </source>
</evidence>
<evidence type="ECO:0007829" key="18">
    <source>
        <dbReference type="PDB" id="1VYT"/>
    </source>
</evidence>
<organism>
    <name type="scientific">Rattus norvegicus</name>
    <name type="common">Rat</name>
    <dbReference type="NCBI Taxonomy" id="10116"/>
    <lineage>
        <taxon>Eukaryota</taxon>
        <taxon>Metazoa</taxon>
        <taxon>Chordata</taxon>
        <taxon>Craniata</taxon>
        <taxon>Vertebrata</taxon>
        <taxon>Euteleostomi</taxon>
        <taxon>Mammalia</taxon>
        <taxon>Eutheria</taxon>
        <taxon>Euarchontoglires</taxon>
        <taxon>Glires</taxon>
        <taxon>Rodentia</taxon>
        <taxon>Myomorpha</taxon>
        <taxon>Muroidea</taxon>
        <taxon>Muridae</taxon>
        <taxon>Murinae</taxon>
        <taxon>Rattus</taxon>
    </lineage>
</organism>
<accession>P22002</accession>
<accession>P27733</accession>
<accession>P27734</accession>
<accession>Q62816</accession>
<accession>Q63271</accession>
<accession>Q64178</accession>
<sequence>MIRAFAQPSTPPYQPLSSCLSEDTERKFKGKVVHEAQLNCFYISPGGSNYGSPRPAHANMNANAAAGLAPEHIPTPGAALSWLAAIDAARQAKLMGSAGNATISTVSSTQRKRQQYGKPKKQGGTTATRPPRALLCLTLKNPIRRACISIVEWKPFEIIILLTIFANCVALAIYIPFPEDDSNATNSNLERVEYLFLIIFTVEAFLKVIAYGLLFHPNAYLRNGWNLLDFIIVVVGLFSAILEQATKADGANALGGKGAGFDVKALRAFRVLRPLRLVSGVPSLQVVLNSIIKAMVPLLHIALLVLFVIIIYAIIGLELFMGKMHKTCYNQEGIIDVPAEEDPSPCALETGHGRQCQNGTVCKPGWDGPKHGITNFDNFAFAMLTVFQCITMEGWTDVLYWMQDAMGYELPWVYFVSLVIFGSFFVLNLVLGVLSGEFSKEREKAKARGDFQKLREKQQLEEDLKGYLDWITQAEDIDPENEDEGMDEDKPRNMSMPTSETESVNTENVAGGDIEGENCGARLAHRISKSKFSRYWRRWNRFCRRKCRAAVKSNVFYWLVIFLVFLNTLTIASEHYNQPHWLTEVQDTANKALLALFTAEMLLKMYSLGLQAYFVSLFNRFDCFIVCGGILETILVETKIMSPLGISCWRCVRLLRIFKITRYWNSLSNLVASLLNSLRSIASLLLLLFLFIIIFSLLGMQLFGGKFNFDEMQTRRSTFDNFPQSLLTVFQILTGEDWNSVMYDGIMAYGGPSFPGMLVCIYFIILFISPNYILLNLFLAIAVDNLADAESLTSAQKEEEEEKERKKLARTASPEKKQEVMEKPAVEESKEEKIELKSITADGESPPTTKINMDDLQPSENEDKSPHSNPDTAGEEDEEEPEMPVGPRPRPLSELHLKEKAVPMPEASAFFIFSPNNRFRLQCHRIVNDTIFTNLILFFILLSSISLAAEDPVQHTSFRNHILFYFDIVFTTIFTIEIALKMTAYGAFLHKGSFCRNYFNILDLLVVSVSLISFGIQSSAINVVKILRVLRVLRPLRINRAKGLKHVVQCVFVAIRTIGNIVIVTTLLQFMFACIGVQLFKGKLYTCSDSSKQTEAESKGNYITYKTGEVDHPIIQPRSWENSKFDFDNVLAAMMALFTVSTFEGWPELLYRSIDSHTEDKGPIYNYRVEISIFFIIYIIIIAFFMMNIFVGFVIVTFQEQGEQEYKNCELDKNQRQCVEYALKARPLPRYIPKNQHQYKVWYVVNSTYFEYLMFVLILLNTICLAMQHYGQSCLFKIAMNILNMLFTGLFTVEMILKLIAFKPKHYFCDAWNTFDALIVVGSIVDIAITEVHPAEHTQCSPSMSAEENSRISITFFRLFRVMRLVKLLSRGEGIRTLLWTFIKSFQALPYVALLIVMLFFIYAVIGMQVFGKIALNDTTEINRNNNFQTFPQAVLLLFRCATGEAWQDIMLACMPGKKCAPESEPSNSTEGETPCGSSFAVFYFISFYMLCAFLIINLFVAVIMDNFDYLTRDWSILGPHHLDEFKRIWAEYDPEAKGRIKHLDVVTLLRRIQPPLGFGKLCPHRVACKRLVSMNMPLNSDGTVMFNATLFALVRTALRIKTEGNLEQANEELRAIIKKIWKRTSMKLLDQVVPPAGDDEVTVGKFYATFLIQEYFRKFKKRKEQGLVGKPSQRNALSLQAGLRTLHDIGPEIRRAISGDLTAEEELDKAMKEAVSAASEDDIFRRAGGLFGNHVSYYQSDSRSNFPQTFATQRPLHINKTGNNQADTESPSHEKLVDSTFTPSSYSSTGSNANINNANNTALGRFPHPAGYSSTVSTVEGHGPPLSPAVRVQEAAWKLSSKRCHSRESQGATVSQDMFPDETRSSVRLSEEVEYCSEPSLLSTDILSYQDDENRQLTCLEEDKREIQPCPKRSFLRSASLGRRASFHLECLKRQKDQGGDISQKTALPLHLVHHQALAVAGLSPLLQRSHSPSTFPRPRPTPPVTPGSRGRPLQPIPTLRLEGAESSEKLNSSFPSIHCSSWSEETTACSGGSSMARRARPVSLTVPSQAGAPGRQFHGSASSLVEAVLISEGLGQFAQDPKFIEVTTQELADACDMTIEEMENAADNILSGGAQQSPNGTLLPFVNCRDPGQDRAVVPEDESCVYALGRGRSEEALPDSRSYVSNL</sequence>
<dbReference type="EMBL" id="M59786">
    <property type="protein sequence ID" value="AAA85463.1"/>
    <property type="molecule type" value="mRNA"/>
</dbReference>
<dbReference type="EMBL" id="M67515">
    <property type="protein sequence ID" value="AAA18905.1"/>
    <property type="molecule type" value="mRNA"/>
</dbReference>
<dbReference type="EMBL" id="M67516">
    <property type="protein sequence ID" value="AAA42016.1"/>
    <property type="molecule type" value="mRNA"/>
</dbReference>
<dbReference type="EMBL" id="M91242">
    <property type="protein sequence ID" value="AAA41460.1"/>
    <property type="molecule type" value="Genomic_DNA"/>
</dbReference>
<dbReference type="EMBL" id="M91240">
    <property type="protein sequence ID" value="AAA41460.1"/>
    <property type="status" value="JOINED"/>
    <property type="molecule type" value="Genomic_DNA"/>
</dbReference>
<dbReference type="EMBL" id="M89924">
    <property type="protein sequence ID" value="AAA41460.1"/>
    <property type="status" value="JOINED"/>
    <property type="molecule type" value="Genomic_DNA"/>
</dbReference>
<dbReference type="EMBL" id="M91241">
    <property type="protein sequence ID" value="AAA41460.1"/>
    <property type="status" value="JOINED"/>
    <property type="molecule type" value="Genomic_DNA"/>
</dbReference>
<dbReference type="EMBL" id="S80558">
    <property type="protein sequence ID" value="AAB35528.1"/>
    <property type="molecule type" value="mRNA"/>
</dbReference>
<dbReference type="EMBL" id="U31815">
    <property type="protein sequence ID" value="AAA89157.1"/>
    <property type="molecule type" value="mRNA"/>
</dbReference>
<dbReference type="RefSeq" id="NP_036649.2">
    <property type="nucleotide sequence ID" value="NM_012517.2"/>
</dbReference>
<dbReference type="PDB" id="1VYT">
    <property type="method" value="X-ray"/>
    <property type="resolution" value="2.60 A"/>
    <property type="chains" value="E/F=452-476"/>
</dbReference>
<dbReference type="PDBsum" id="1VYT"/>
<dbReference type="SMR" id="P22002"/>
<dbReference type="BioGRID" id="246425">
    <property type="interactions" value="4"/>
</dbReference>
<dbReference type="CORUM" id="P22002"/>
<dbReference type="FunCoup" id="P22002">
    <property type="interactions" value="1849"/>
</dbReference>
<dbReference type="IntAct" id="P22002">
    <property type="interactions" value="4"/>
</dbReference>
<dbReference type="MINT" id="P22002"/>
<dbReference type="STRING" id="10116.ENSRNOP00000048790"/>
<dbReference type="BindingDB" id="P22002"/>
<dbReference type="ChEMBL" id="CHEMBL3762"/>
<dbReference type="DrugCentral" id="P22002"/>
<dbReference type="GuidetoPHARMACOLOGY" id="529"/>
<dbReference type="GlyCosmos" id="P22002">
    <property type="glycosylation" value="4 sites, No reported glycans"/>
</dbReference>
<dbReference type="GlyGen" id="P22002">
    <property type="glycosylation" value="6 sites"/>
</dbReference>
<dbReference type="iPTMnet" id="P22002"/>
<dbReference type="PhosphoSitePlus" id="P22002"/>
<dbReference type="PaxDb" id="10116-ENSRNOP00000009268"/>
<dbReference type="ABCD" id="P22002">
    <property type="antibodies" value="2 sequenced antibodies"/>
</dbReference>
<dbReference type="GeneID" id="24239"/>
<dbReference type="KEGG" id="rno:24239"/>
<dbReference type="UCSC" id="RGD:2245">
    <molecule id="P22002-1"/>
    <property type="organism name" value="rat"/>
</dbReference>
<dbReference type="AGR" id="RGD:2245"/>
<dbReference type="CTD" id="775"/>
<dbReference type="RGD" id="2245">
    <property type="gene designation" value="Cacna1c"/>
</dbReference>
<dbReference type="eggNOG" id="KOG2301">
    <property type="taxonomic scope" value="Eukaryota"/>
</dbReference>
<dbReference type="InParanoid" id="P22002"/>
<dbReference type="OrthoDB" id="47416at9989"/>
<dbReference type="PhylomeDB" id="P22002"/>
<dbReference type="Reactome" id="R-RNO-422356">
    <property type="pathway name" value="Regulation of insulin secretion"/>
</dbReference>
<dbReference type="Reactome" id="R-RNO-5576892">
    <property type="pathway name" value="Phase 0 - rapid depolarisation"/>
</dbReference>
<dbReference type="Reactome" id="R-RNO-5576893">
    <property type="pathway name" value="Phase 2 - plateau phase"/>
</dbReference>
<dbReference type="EvolutionaryTrace" id="P22002"/>
<dbReference type="PRO" id="PR:P22002"/>
<dbReference type="Proteomes" id="UP000002494">
    <property type="component" value="Unplaced"/>
</dbReference>
<dbReference type="GO" id="GO:0030424">
    <property type="term" value="C:axon"/>
    <property type="evidence" value="ECO:0000314"/>
    <property type="project" value="RGD"/>
</dbReference>
<dbReference type="GO" id="GO:0002095">
    <property type="term" value="C:caveolar macromolecular signaling complex"/>
    <property type="evidence" value="ECO:0000266"/>
    <property type="project" value="RGD"/>
</dbReference>
<dbReference type="GO" id="GO:0009986">
    <property type="term" value="C:cell surface"/>
    <property type="evidence" value="ECO:0000314"/>
    <property type="project" value="RGD"/>
</dbReference>
<dbReference type="GO" id="GO:0005737">
    <property type="term" value="C:cytoplasm"/>
    <property type="evidence" value="ECO:0000266"/>
    <property type="project" value="RGD"/>
</dbReference>
<dbReference type="GO" id="GO:0030425">
    <property type="term" value="C:dendrite"/>
    <property type="evidence" value="ECO:0000314"/>
    <property type="project" value="UniProtKB"/>
</dbReference>
<dbReference type="GO" id="GO:0043198">
    <property type="term" value="C:dendritic shaft"/>
    <property type="evidence" value="ECO:0000266"/>
    <property type="project" value="RGD"/>
</dbReference>
<dbReference type="GO" id="GO:0098978">
    <property type="term" value="C:glutamatergic synapse"/>
    <property type="evidence" value="ECO:0000314"/>
    <property type="project" value="SynGO"/>
</dbReference>
<dbReference type="GO" id="GO:1990454">
    <property type="term" value="C:L-type voltage-gated calcium channel complex"/>
    <property type="evidence" value="ECO:0000314"/>
    <property type="project" value="UniProtKB"/>
</dbReference>
<dbReference type="GO" id="GO:0016020">
    <property type="term" value="C:membrane"/>
    <property type="evidence" value="ECO:0000266"/>
    <property type="project" value="RGD"/>
</dbReference>
<dbReference type="GO" id="GO:0043025">
    <property type="term" value="C:neuronal cell body"/>
    <property type="evidence" value="ECO:0000314"/>
    <property type="project" value="UniProtKB"/>
</dbReference>
<dbReference type="GO" id="GO:0043204">
    <property type="term" value="C:perikaryon"/>
    <property type="evidence" value="ECO:0007669"/>
    <property type="project" value="UniProtKB-SubCell"/>
</dbReference>
<dbReference type="GO" id="GO:0005886">
    <property type="term" value="C:plasma membrane"/>
    <property type="evidence" value="ECO:0000250"/>
    <property type="project" value="UniProtKB"/>
</dbReference>
<dbReference type="GO" id="GO:0014069">
    <property type="term" value="C:postsynaptic density"/>
    <property type="evidence" value="ECO:0000314"/>
    <property type="project" value="UniProtKB"/>
</dbReference>
<dbReference type="GO" id="GO:0098839">
    <property type="term" value="C:postsynaptic density membrane"/>
    <property type="evidence" value="ECO:0007669"/>
    <property type="project" value="UniProtKB-SubCell"/>
</dbReference>
<dbReference type="GO" id="GO:0045211">
    <property type="term" value="C:postsynaptic membrane"/>
    <property type="evidence" value="ECO:0000314"/>
    <property type="project" value="SynGO"/>
</dbReference>
<dbReference type="GO" id="GO:0042734">
    <property type="term" value="C:presynaptic membrane"/>
    <property type="evidence" value="ECO:0000314"/>
    <property type="project" value="SynGO"/>
</dbReference>
<dbReference type="GO" id="GO:0032991">
    <property type="term" value="C:protein-containing complex"/>
    <property type="evidence" value="ECO:0000314"/>
    <property type="project" value="RGD"/>
</dbReference>
<dbReference type="GO" id="GO:0042383">
    <property type="term" value="C:sarcolemma"/>
    <property type="evidence" value="ECO:0000314"/>
    <property type="project" value="RGD"/>
</dbReference>
<dbReference type="GO" id="GO:0030315">
    <property type="term" value="C:T-tubule"/>
    <property type="evidence" value="ECO:0000314"/>
    <property type="project" value="RGD"/>
</dbReference>
<dbReference type="GO" id="GO:0005891">
    <property type="term" value="C:voltage-gated calcium channel complex"/>
    <property type="evidence" value="ECO:0000314"/>
    <property type="project" value="RGD"/>
</dbReference>
<dbReference type="GO" id="GO:0030018">
    <property type="term" value="C:Z disc"/>
    <property type="evidence" value="ECO:0000314"/>
    <property type="project" value="BHF-UCL"/>
</dbReference>
<dbReference type="GO" id="GO:0051393">
    <property type="term" value="F:alpha-actinin binding"/>
    <property type="evidence" value="ECO:0000250"/>
    <property type="project" value="BHF-UCL"/>
</dbReference>
<dbReference type="GO" id="GO:0005516">
    <property type="term" value="F:calmodulin binding"/>
    <property type="evidence" value="ECO:0000266"/>
    <property type="project" value="RGD"/>
</dbReference>
<dbReference type="GO" id="GO:0019899">
    <property type="term" value="F:enzyme binding"/>
    <property type="evidence" value="ECO:0000266"/>
    <property type="project" value="RGD"/>
</dbReference>
<dbReference type="GO" id="GO:0008331">
    <property type="term" value="F:high voltage-gated calcium channel activity"/>
    <property type="evidence" value="ECO:0000314"/>
    <property type="project" value="RGD"/>
</dbReference>
<dbReference type="GO" id="GO:0046872">
    <property type="term" value="F:metal ion binding"/>
    <property type="evidence" value="ECO:0007669"/>
    <property type="project" value="UniProtKB-KW"/>
</dbReference>
<dbReference type="GO" id="GO:0019904">
    <property type="term" value="F:protein domain specific binding"/>
    <property type="evidence" value="ECO:0000353"/>
    <property type="project" value="RGD"/>
</dbReference>
<dbReference type="GO" id="GO:0051721">
    <property type="term" value="F:protein phosphatase 2A binding"/>
    <property type="evidence" value="ECO:0000353"/>
    <property type="project" value="RGD"/>
</dbReference>
<dbReference type="GO" id="GO:0031369">
    <property type="term" value="F:translation initiation factor binding"/>
    <property type="evidence" value="ECO:0000353"/>
    <property type="project" value="RGD"/>
</dbReference>
<dbReference type="GO" id="GO:0044325">
    <property type="term" value="F:transmembrane transporter binding"/>
    <property type="evidence" value="ECO:0000353"/>
    <property type="project" value="BHF-UCL"/>
</dbReference>
<dbReference type="GO" id="GO:0005245">
    <property type="term" value="F:voltage-gated calcium channel activity"/>
    <property type="evidence" value="ECO:0000314"/>
    <property type="project" value="UniProtKB"/>
</dbReference>
<dbReference type="GO" id="GO:0086056">
    <property type="term" value="F:voltage-gated calcium channel activity involved in AV node cell action potential"/>
    <property type="evidence" value="ECO:0000250"/>
    <property type="project" value="BHF-UCL"/>
</dbReference>
<dbReference type="GO" id="GO:0086007">
    <property type="term" value="F:voltage-gated calcium channel activity involved in cardiac muscle cell action potential"/>
    <property type="evidence" value="ECO:0000250"/>
    <property type="project" value="BHF-UCL"/>
</dbReference>
<dbReference type="GO" id="GO:0007628">
    <property type="term" value="P:adult walking behavior"/>
    <property type="evidence" value="ECO:0000266"/>
    <property type="project" value="RGD"/>
</dbReference>
<dbReference type="GO" id="GO:0061564">
    <property type="term" value="P:axon development"/>
    <property type="evidence" value="ECO:0000270"/>
    <property type="project" value="RGD"/>
</dbReference>
<dbReference type="GO" id="GO:0070509">
    <property type="term" value="P:calcium ion import"/>
    <property type="evidence" value="ECO:0000315"/>
    <property type="project" value="RGD"/>
</dbReference>
<dbReference type="GO" id="GO:0098703">
    <property type="term" value="P:calcium ion import across plasma membrane"/>
    <property type="evidence" value="ECO:0000266"/>
    <property type="project" value="RGD"/>
</dbReference>
<dbReference type="GO" id="GO:0070588">
    <property type="term" value="P:calcium ion transmembrane transport"/>
    <property type="evidence" value="ECO:0000266"/>
    <property type="project" value="RGD"/>
</dbReference>
<dbReference type="GO" id="GO:0061577">
    <property type="term" value="P:calcium ion transmembrane transport via high voltage-gated calcium channel"/>
    <property type="evidence" value="ECO:0000314"/>
    <property type="project" value="UniProtKB"/>
</dbReference>
<dbReference type="GO" id="GO:0006816">
    <property type="term" value="P:calcium ion transport"/>
    <property type="evidence" value="ECO:0000315"/>
    <property type="project" value="RGD"/>
</dbReference>
<dbReference type="GO" id="GO:0060402">
    <property type="term" value="P:calcium ion transport into cytosol"/>
    <property type="evidence" value="ECO:0000250"/>
    <property type="project" value="UniProtKB"/>
</dbReference>
<dbReference type="GO" id="GO:0017156">
    <property type="term" value="P:calcium-ion regulated exocytosis"/>
    <property type="evidence" value="ECO:0000266"/>
    <property type="project" value="RGD"/>
</dbReference>
<dbReference type="GO" id="GO:0043010">
    <property type="term" value="P:camera-type eye development"/>
    <property type="evidence" value="ECO:0000266"/>
    <property type="project" value="RGD"/>
</dbReference>
<dbReference type="GO" id="GO:0061337">
    <property type="term" value="P:cardiac conduction"/>
    <property type="evidence" value="ECO:0000250"/>
    <property type="project" value="UniProtKB"/>
</dbReference>
<dbReference type="GO" id="GO:0086002">
    <property type="term" value="P:cardiac muscle cell action potential involved in contraction"/>
    <property type="evidence" value="ECO:0000250"/>
    <property type="project" value="BHF-UCL"/>
</dbReference>
<dbReference type="GO" id="GO:0086065">
    <property type="term" value="P:cell communication involved in cardiac conduction"/>
    <property type="evidence" value="ECO:0000266"/>
    <property type="project" value="RGD"/>
</dbReference>
<dbReference type="GO" id="GO:1904646">
    <property type="term" value="P:cellular response to amyloid-beta"/>
    <property type="evidence" value="ECO:0000270"/>
    <property type="project" value="RGD"/>
</dbReference>
<dbReference type="GO" id="GO:0021987">
    <property type="term" value="P:cerebral cortex development"/>
    <property type="evidence" value="ECO:0000270"/>
    <property type="project" value="RGD"/>
</dbReference>
<dbReference type="GO" id="GO:0007268">
    <property type="term" value="P:chemical synaptic transmission"/>
    <property type="evidence" value="ECO:0000266"/>
    <property type="project" value="RGD"/>
</dbReference>
<dbReference type="GO" id="GO:0022038">
    <property type="term" value="P:corpus callosum development"/>
    <property type="evidence" value="ECO:0000270"/>
    <property type="project" value="RGD"/>
</dbReference>
<dbReference type="GO" id="GO:0035115">
    <property type="term" value="P:embryonic forelimb morphogenesis"/>
    <property type="evidence" value="ECO:0000266"/>
    <property type="project" value="RGD"/>
</dbReference>
<dbReference type="GO" id="GO:0051649">
    <property type="term" value="P:establishment of localization in cell"/>
    <property type="evidence" value="ECO:0000266"/>
    <property type="project" value="RGD"/>
</dbReference>
<dbReference type="GO" id="GO:0006887">
    <property type="term" value="P:exocytosis"/>
    <property type="evidence" value="ECO:0000315"/>
    <property type="project" value="RGD"/>
</dbReference>
<dbReference type="GO" id="GO:0042593">
    <property type="term" value="P:glucose homeostasis"/>
    <property type="evidence" value="ECO:0000266"/>
    <property type="project" value="RGD"/>
</dbReference>
<dbReference type="GO" id="GO:0030252">
    <property type="term" value="P:growth hormone secretion"/>
    <property type="evidence" value="ECO:0000266"/>
    <property type="project" value="RGD"/>
</dbReference>
<dbReference type="GO" id="GO:0007507">
    <property type="term" value="P:heart development"/>
    <property type="evidence" value="ECO:0000266"/>
    <property type="project" value="RGD"/>
</dbReference>
<dbReference type="GO" id="GO:0002520">
    <property type="term" value="P:immune system development"/>
    <property type="evidence" value="ECO:0000266"/>
    <property type="project" value="RGD"/>
</dbReference>
<dbReference type="GO" id="GO:0030073">
    <property type="term" value="P:insulin secretion"/>
    <property type="evidence" value="ECO:0000266"/>
    <property type="project" value="RGD"/>
</dbReference>
<dbReference type="GO" id="GO:0006874">
    <property type="term" value="P:intracellular calcium ion homeostasis"/>
    <property type="evidence" value="ECO:0000266"/>
    <property type="project" value="RGD"/>
</dbReference>
<dbReference type="GO" id="GO:0098912">
    <property type="term" value="P:membrane depolarization during atrial cardiac muscle cell action potential"/>
    <property type="evidence" value="ECO:0000250"/>
    <property type="project" value="BHF-UCL"/>
</dbReference>
<dbReference type="GO" id="GO:0086045">
    <property type="term" value="P:membrane depolarization during AV node cell action potential"/>
    <property type="evidence" value="ECO:0000250"/>
    <property type="project" value="BHF-UCL"/>
</dbReference>
<dbReference type="GO" id="GO:0086012">
    <property type="term" value="P:membrane depolarization during cardiac muscle cell action potential"/>
    <property type="evidence" value="ECO:0000250"/>
    <property type="project" value="BHF-UCL"/>
</dbReference>
<dbReference type="GO" id="GO:0021554">
    <property type="term" value="P:optic nerve development"/>
    <property type="evidence" value="ECO:0000270"/>
    <property type="project" value="RGD"/>
</dbReference>
<dbReference type="GO" id="GO:0045762">
    <property type="term" value="P:positive regulation of adenylate cyclase activity"/>
    <property type="evidence" value="ECO:0000250"/>
    <property type="project" value="UniProtKB"/>
</dbReference>
<dbReference type="GO" id="GO:1904879">
    <property type="term" value="P:positive regulation of calcium ion transmembrane transport via high voltage-gated calcium channel"/>
    <property type="evidence" value="ECO:0000315"/>
    <property type="project" value="RGD"/>
</dbReference>
<dbReference type="GO" id="GO:0007204">
    <property type="term" value="P:positive regulation of cytosolic calcium ion concentration"/>
    <property type="evidence" value="ECO:0000266"/>
    <property type="project" value="RGD"/>
</dbReference>
<dbReference type="GO" id="GO:0032024">
    <property type="term" value="P:positive regulation of insulin secretion"/>
    <property type="evidence" value="ECO:0000315"/>
    <property type="project" value="RGD"/>
</dbReference>
<dbReference type="GO" id="GO:1904181">
    <property type="term" value="P:positive regulation of membrane depolarization"/>
    <property type="evidence" value="ECO:0000315"/>
    <property type="project" value="RGD"/>
</dbReference>
<dbReference type="GO" id="GO:0008217">
    <property type="term" value="P:regulation of blood pressure"/>
    <property type="evidence" value="ECO:0000266"/>
    <property type="project" value="RGD"/>
</dbReference>
<dbReference type="GO" id="GO:0010881">
    <property type="term" value="P:regulation of cardiac muscle contraction by regulation of the release of sequestered calcium ion"/>
    <property type="evidence" value="ECO:0000250"/>
    <property type="project" value="UniProtKB"/>
</dbReference>
<dbReference type="GO" id="GO:0086091">
    <property type="term" value="P:regulation of heart rate by cardiac conduction"/>
    <property type="evidence" value="ECO:0000250"/>
    <property type="project" value="BHF-UCL"/>
</dbReference>
<dbReference type="GO" id="GO:0046620">
    <property type="term" value="P:regulation of organ growth"/>
    <property type="evidence" value="ECO:0000266"/>
    <property type="project" value="RGD"/>
</dbReference>
<dbReference type="GO" id="GO:0019229">
    <property type="term" value="P:regulation of vasoconstriction"/>
    <property type="evidence" value="ECO:0000266"/>
    <property type="project" value="RGD"/>
</dbReference>
<dbReference type="GO" id="GO:0098911">
    <property type="term" value="P:regulation of ventricular cardiac muscle cell action potential"/>
    <property type="evidence" value="ECO:0000250"/>
    <property type="project" value="BHF-UCL"/>
</dbReference>
<dbReference type="GO" id="GO:0097305">
    <property type="term" value="P:response to alcohol"/>
    <property type="evidence" value="ECO:0000270"/>
    <property type="project" value="RGD"/>
</dbReference>
<dbReference type="GO" id="GO:0031667">
    <property type="term" value="P:response to nutrient levels"/>
    <property type="evidence" value="ECO:0000270"/>
    <property type="project" value="RGD"/>
</dbReference>
<dbReference type="GO" id="GO:0006939">
    <property type="term" value="P:smooth muscle contraction"/>
    <property type="evidence" value="ECO:0000266"/>
    <property type="project" value="RGD"/>
</dbReference>
<dbReference type="GO" id="GO:0060083">
    <property type="term" value="P:smooth muscle contraction involved in micturition"/>
    <property type="evidence" value="ECO:0000266"/>
    <property type="project" value="RGD"/>
</dbReference>
<dbReference type="GO" id="GO:0008542">
    <property type="term" value="P:visual learning"/>
    <property type="evidence" value="ECO:0000266"/>
    <property type="project" value="RGD"/>
</dbReference>
<dbReference type="FunFam" id="1.10.287.70:FF:000007">
    <property type="entry name" value="Voltage-dependent L-type calcium channel subunit alpha"/>
    <property type="match status" value="1"/>
</dbReference>
<dbReference type="FunFam" id="1.10.287.70:FF:000009">
    <property type="entry name" value="Voltage-dependent L-type calcium channel subunit alpha"/>
    <property type="match status" value="1"/>
</dbReference>
<dbReference type="FunFam" id="1.10.287.70:FF:000021">
    <property type="entry name" value="Voltage-dependent L-type calcium channel subunit alpha"/>
    <property type="match status" value="1"/>
</dbReference>
<dbReference type="FunFam" id="1.20.120.350:FF:000001">
    <property type="entry name" value="Voltage-dependent L-type calcium channel subunit alpha"/>
    <property type="match status" value="1"/>
</dbReference>
<dbReference type="FunFam" id="1.20.120.350:FF:000006">
    <property type="entry name" value="Voltage-dependent L-type calcium channel subunit alpha"/>
    <property type="match status" value="1"/>
</dbReference>
<dbReference type="FunFam" id="1.20.120.350:FF:000010">
    <property type="entry name" value="Voltage-dependent L-type calcium channel subunit alpha"/>
    <property type="match status" value="1"/>
</dbReference>
<dbReference type="FunFam" id="1.20.120.350:FF:000060">
    <property type="entry name" value="Voltage-dependent L-type calcium channel subunit alpha"/>
    <property type="match status" value="1"/>
</dbReference>
<dbReference type="FunFam" id="1.20.120.350:FF:000090">
    <property type="entry name" value="Voltage-dependent L-type calcium channel subunit alpha"/>
    <property type="match status" value="1"/>
</dbReference>
<dbReference type="FunFam" id="1.10.238.10:FF:000063">
    <property type="entry name" value="Voltage-dependent N-type calcium channel subunit alpha"/>
    <property type="match status" value="1"/>
</dbReference>
<dbReference type="Gene3D" id="1.10.287.70">
    <property type="match status" value="4"/>
</dbReference>
<dbReference type="Gene3D" id="6.10.250.2180">
    <property type="match status" value="1"/>
</dbReference>
<dbReference type="Gene3D" id="6.10.250.2500">
    <property type="match status" value="1"/>
</dbReference>
<dbReference type="Gene3D" id="1.20.120.350">
    <property type="entry name" value="Voltage-gated potassium channels. Chain C"/>
    <property type="match status" value="4"/>
</dbReference>
<dbReference type="InterPro" id="IPR031688">
    <property type="entry name" value="CAC1F_C"/>
</dbReference>
<dbReference type="InterPro" id="IPR031649">
    <property type="entry name" value="GPHH_dom"/>
</dbReference>
<dbReference type="InterPro" id="IPR005821">
    <property type="entry name" value="Ion_trans_dom"/>
</dbReference>
<dbReference type="InterPro" id="IPR014873">
    <property type="entry name" value="VDCC_a1su_IQ"/>
</dbReference>
<dbReference type="InterPro" id="IPR050599">
    <property type="entry name" value="VDCC_alpha-1_subunit"/>
</dbReference>
<dbReference type="InterPro" id="IPR005451">
    <property type="entry name" value="VDCC_L_a1csu"/>
</dbReference>
<dbReference type="InterPro" id="IPR005446">
    <property type="entry name" value="VDCC_L_a1su"/>
</dbReference>
<dbReference type="InterPro" id="IPR002077">
    <property type="entry name" value="VDCCAlpha1"/>
</dbReference>
<dbReference type="InterPro" id="IPR027359">
    <property type="entry name" value="Volt_channel_dom_sf"/>
</dbReference>
<dbReference type="PANTHER" id="PTHR45628">
    <property type="entry name" value="VOLTAGE-DEPENDENT CALCIUM CHANNEL TYPE A SUBUNIT ALPHA-1"/>
    <property type="match status" value="1"/>
</dbReference>
<dbReference type="PANTHER" id="PTHR45628:SF10">
    <property type="entry name" value="VOLTAGE-DEPENDENT L-TYPE CALCIUM CHANNEL SUBUNIT ALPHA-1C"/>
    <property type="match status" value="1"/>
</dbReference>
<dbReference type="Pfam" id="PF08763">
    <property type="entry name" value="Ca_chan_IQ"/>
    <property type="match status" value="1"/>
</dbReference>
<dbReference type="Pfam" id="PF16885">
    <property type="entry name" value="CAC1F_C"/>
    <property type="match status" value="1"/>
</dbReference>
<dbReference type="Pfam" id="PF16905">
    <property type="entry name" value="GPHH"/>
    <property type="match status" value="1"/>
</dbReference>
<dbReference type="Pfam" id="PF00520">
    <property type="entry name" value="Ion_trans"/>
    <property type="match status" value="4"/>
</dbReference>
<dbReference type="PRINTS" id="PR00167">
    <property type="entry name" value="CACHANNEL"/>
</dbReference>
<dbReference type="PRINTS" id="PR01630">
    <property type="entry name" value="LVDCCALPHA1"/>
</dbReference>
<dbReference type="PRINTS" id="PR01635">
    <property type="entry name" value="LVDCCALPHA1C"/>
</dbReference>
<dbReference type="SMART" id="SM01062">
    <property type="entry name" value="Ca_chan_IQ"/>
    <property type="match status" value="1"/>
</dbReference>
<dbReference type="SUPFAM" id="SSF81324">
    <property type="entry name" value="Voltage-gated potassium channels"/>
    <property type="match status" value="4"/>
</dbReference>
<keyword id="KW-0002">3D-structure</keyword>
<keyword id="KW-0025">Alternative splicing</keyword>
<keyword id="KW-0106">Calcium</keyword>
<keyword id="KW-0107">Calcium channel</keyword>
<keyword id="KW-0109">Calcium transport</keyword>
<keyword id="KW-0112">Calmodulin-binding</keyword>
<keyword id="KW-1003">Cell membrane</keyword>
<keyword id="KW-0966">Cell projection</keyword>
<keyword id="KW-1015">Disulfide bond</keyword>
<keyword id="KW-0325">Glycoprotein</keyword>
<keyword id="KW-0407">Ion channel</keyword>
<keyword id="KW-0406">Ion transport</keyword>
<keyword id="KW-0472">Membrane</keyword>
<keyword id="KW-0479">Metal-binding</keyword>
<keyword id="KW-0597">Phosphoprotein</keyword>
<keyword id="KW-0628">Postsynaptic cell membrane</keyword>
<keyword id="KW-1185">Reference proteome</keyword>
<keyword id="KW-0677">Repeat</keyword>
<keyword id="KW-0770">Synapse</keyword>
<keyword id="KW-0812">Transmembrane</keyword>
<keyword id="KW-1133">Transmembrane helix</keyword>
<keyword id="KW-0813">Transport</keyword>
<keyword id="KW-0851">Voltage-gated channel</keyword>
<reference key="1">
    <citation type="journal article" date="1990" name="J. Biol. Chem.">
        <title>cDNA cloning of a dihydropyridine-sensitive calcium channel from rat aorta. Evidence for the existence of alternatively spliced forms.</title>
        <authorList>
            <person name="Koch W.J."/>
            <person name="Ellinor P.T."/>
            <person name="Schwartz A."/>
        </authorList>
    </citation>
    <scope>NUCLEOTIDE SEQUENCE [MRNA] (ISOFORM 2)</scope>
    <source>
        <tissue>Aorta</tissue>
    </source>
</reference>
<reference key="2">
    <citation type="journal article" date="1991" name="Neuron">
        <title>Distinct calcium channels are generated by alternative splicing and are differentially expressed in the mammalian CNS.</title>
        <authorList>
            <person name="Snutch T.P."/>
            <person name="Tomlinson W.J."/>
            <person name="Leonard J.P."/>
            <person name="Gilbert M.M."/>
        </authorList>
    </citation>
    <scope>NUCLEOTIDE SEQUENCE [MRNA] (ISOFORMS 4 AND 5)</scope>
    <scope>FUNCTION</scope>
    <scope>SUBCELLULAR LOCATION</scope>
    <scope>TRANSPORTER ACTIVITY</scope>
    <source>
        <tissue>Brain</tissue>
    </source>
</reference>
<reference key="3">
    <citation type="journal article" date="1990" name="Proc. Natl. Acad. Sci. U.S.A.">
        <title>Rat brain expresses a heterogeneous family of calcium channels.</title>
        <authorList>
            <person name="Snutch T.P."/>
            <person name="Leonard J.P."/>
            <person name="Gilbert M.M."/>
            <person name="Lester H.A."/>
            <person name="Davidson N."/>
        </authorList>
    </citation>
    <scope>NUCLEOTIDE SEQUENCE [MRNA] OF 1168-1413 (ISOFORM 1)</scope>
</reference>
<reference key="4">
    <citation type="journal article" date="1992" name="Proc. Natl. Acad. Sci. U.S.A.">
        <title>Mutually exclusive exon splicing of the cardiac calcium channel a1 subunit generates developmentally regulated isoforms in the rat heart.</title>
        <authorList>
            <person name="Diebold R.J."/>
            <person name="Koch W.J."/>
            <person name="Ellinor P.T."/>
            <person name="Wang J.-J."/>
            <person name="Muthuchamy M."/>
            <person name="Wieczorek D.F."/>
            <person name="Schwartz A."/>
        </authorList>
    </citation>
    <scope>NUCLEOTIDE SEQUENCE [GENOMIC DNA] OF 1269-1415 (ISOFORMS 1; 2 AND 3)</scope>
</reference>
<reference key="5">
    <citation type="journal article" date="1995" name="Am. J. Physiol.">
        <title>Changes in transcripts encoding calcium channel subunits of rat myometrium during pregnancy.</title>
        <authorList>
            <person name="Tezuka N."/>
            <person name="Ali M."/>
            <person name="Chwalisz K."/>
            <person name="Garfield R.E."/>
        </authorList>
    </citation>
    <scope>NUCLEOTIDE SEQUENCE [MRNA] OF 1269-1387</scope>
    <source>
        <tissue>Myometrium</tissue>
    </source>
</reference>
<reference key="6">
    <citation type="journal article" date="1995" name="Proc. Natl. Acad. Sci. U.S.A.">
        <title>Multiple calcium channel transcripts in rat osteosarcoma cells: selective activation of alpha 1D isoform by parathyroid hormone.</title>
        <authorList>
            <person name="Barry E.L.R."/>
            <person name="Gesek F.A."/>
            <person name="Froehner S.C."/>
            <person name="Friedman P.A."/>
        </authorList>
    </citation>
    <scope>NUCLEOTIDE SEQUENCE [MRNA] OF 1202-1495 (ISOFORM 3)</scope>
    <source>
        <tissue>Osteosarcoma</tissue>
    </source>
</reference>
<reference key="7">
    <citation type="journal article" date="1993" name="J. Biol. Chem.">
        <title>Differential phosphorylation of two size forms of the neuronal class C L-type calcium channel alpha 1 subunit.</title>
        <authorList>
            <person name="Hell J.W."/>
            <person name="Yokoyama C.T."/>
            <person name="Wong S.T."/>
            <person name="Warner C."/>
            <person name="Snutch T.P."/>
            <person name="Catterall W.A."/>
        </authorList>
    </citation>
    <scope>PHOSPHORYLATION</scope>
</reference>
<reference key="8">
    <citation type="journal article" date="1997" name="J. Neurosci.">
        <title>Dissection of functional domains of the voltage-dependent Ca2+ channel alpha2delta subunit.</title>
        <authorList>
            <person name="Felix R."/>
            <person name="Gurnett C.A."/>
            <person name="De Waard M."/>
            <person name="Campbell K.P."/>
        </authorList>
    </citation>
    <scope>INTERACTION WITH CACNA2D1</scope>
</reference>
<reference key="9">
    <citation type="journal article" date="2004" name="J. Neurosci.">
        <title>Ca2+-binding protein-1 facilitates and forms a postsynaptic complex with Cav1.2 (L-type) Ca2+ channels.</title>
        <authorList>
            <person name="Zhou H."/>
            <person name="Kim S.-A."/>
            <person name="Kirk E.A."/>
            <person name="Tippens A.L."/>
            <person name="Sun H."/>
            <person name="Haeseleer F."/>
            <person name="Lee A."/>
        </authorList>
    </citation>
    <scope>INTERACTION WITH CABP1</scope>
    <scope>FUNCTION</scope>
    <scope>ACTIVITY REGULATION</scope>
    <scope>SUBCELLULAR LOCATION</scope>
    <scope>TISSUE SPECIFICITY</scope>
    <scope>TRANSPORTER ACTIVITY</scope>
</reference>
<reference key="10">
    <citation type="journal article" date="2012" name="Nat. Commun.">
        <title>Quantitative maps of protein phosphorylation sites across 14 different rat organs and tissues.</title>
        <authorList>
            <person name="Lundby A."/>
            <person name="Secher A."/>
            <person name="Lage K."/>
            <person name="Nordsborg N.B."/>
            <person name="Dmytriyev A."/>
            <person name="Lundby C."/>
            <person name="Olsen J.V."/>
        </authorList>
    </citation>
    <scope>PHOSPHORYLATION [LARGE SCALE ANALYSIS] AT SER-845; SER-1699 AND SER-1720</scope>
    <scope>IDENTIFICATION BY MASS SPECTROMETRY [LARGE SCALE ANALYSIS]</scope>
</reference>
<reference key="11">
    <citation type="journal article" date="2014" name="J. Cell Biol.">
        <title>BARP suppresses voltage-gated calcium channel activity and Ca2+-evoked exocytosis.</title>
        <authorList>
            <person name="Beguin P."/>
            <person name="Nagashima K."/>
            <person name="Mahalakshmi R.N."/>
            <person name="Vigot R."/>
            <person name="Matsunaga A."/>
            <person name="Miki T."/>
            <person name="Ng M.Y."/>
            <person name="Ng Y.J."/>
            <person name="Lim C.H."/>
            <person name="Tay H.S."/>
            <person name="Hwang L.A."/>
            <person name="Firsov D."/>
            <person name="Tang B.L."/>
            <person name="Inagaki N."/>
            <person name="Mori Y."/>
            <person name="Seino S."/>
            <person name="Launey T."/>
            <person name="Hunziker W."/>
        </authorList>
    </citation>
    <scope>INTERACTION WITH CACNB3</scope>
</reference>
<reference key="12">
    <citation type="journal article" date="2004" name="Nature">
        <title>Structural basis of the alpha1-beta subunit interaction of voltage-gated Ca2+ channels.</title>
        <authorList>
            <person name="Chen Y.H."/>
            <person name="Li M.H."/>
            <person name="Zhang Y."/>
            <person name="He L.L."/>
            <person name="Yamada Y."/>
            <person name="Fitzmaurice A."/>
            <person name="Shen Y."/>
            <person name="Zhang H."/>
            <person name="Tong L."/>
            <person name="Yang J."/>
        </authorList>
    </citation>
    <scope>X-RAY CRYSTALLOGRAPHY (2.6 ANGSTROMS) OF 452-476 IN COMPLEX WITH CACNB3</scope>
    <scope>FUNCTION</scope>
    <scope>REGION</scope>
    <scope>TRANSPORTER ACTIVITY</scope>
</reference>